<evidence type="ECO:0000255" key="1"/>
<evidence type="ECO:0000256" key="2">
    <source>
        <dbReference type="SAM" id="MobiDB-lite"/>
    </source>
</evidence>
<evidence type="ECO:0000305" key="3"/>
<protein>
    <recommendedName>
        <fullName>Nuclear pore complex-interacting protein family member B11</fullName>
    </recommendedName>
</protein>
<sequence>MVKLSIVLTPQFLSHDQGQLTKELQQHVKSVTCPCEYLRKVINTLADHHHRGTDFGGSPWLHIIIAFPTSYKVVITLWIVYLWVSLLKTIFWSRNGHDGSTDVQQRAWRSNRRRQEGLRSICMHTKKRVSSFRGNKIGLKDVITLRRHVETKVRAKIRKRKVTTKINRHDKINGKRKTARKQKMFQRAQELRRRAEDYHKCKIPPSARKALCNWVRMAAAEHRHSSGLPYWPYLTAETLKNRMGHQPPPPTQQHCITDNSLSLKTPLECLLTPLPPSADDNLKTPPECLLTPLPPSADDNLKTPPECLLTPLPPSAPPSAPPSADDNLKTRAECLLHPLPPSADDNLKTPSERQLTPLPPSAPPSADDNIKTTAERLRGPLPPSADDNLKTPSERQLTPLPPSAPPSADDNIKTPAEHLRGPLPPSADDNLKTPSERQLTPLPPSAPPSADDNIKTPAERLRGPLPPSADDNLKTPSERQLTPLPPSAPPSADDNIKTPAEHLRGPLPPSADDNLKTPSERQLTPLPPSAPPSADDNIKTTAEHLRGPLPPSADDNLKTPSERQLTPLPPSAPPSADDNIKTPAEHLQFRFHPQRMIISRDLPSVSSLPFHPQLHPQQMIISRYLLSICGFRFHRQRMIISRHLPSVSSLPFHPQLHPQQMIISRHLPSVCGGRFHPQPMIISRHLPSVSSLPFHPQLHPQQMIISRHLPSVCGGRFHPQPMIISRHLPSVSSLPFHPQLHPQQMIISRHLPSVCGGRFHPQPMIISRHLPSVSSLPFHPQLHPQQMIISRHLPSVCGGRFHPQPMIISRHLPSVSSLPFHPQLHPQQMIISRHLPSVCGGRFHPQPMIISRHLPSVSSLPFHPQLHPQQMIISRHLPSVCGERLWVPLPPSADDNLKTPSKRQLTPLPPSAPPSADDNIKTPAERLRGPLPPSADDNLKTPSKRQLTPLPPSAPPSADDNIKTPAERLRGPLPPSADDNLKTPSERQLTPLPPSAPPSADDNIKTPAERLRGPLPPSADDNLKTPSERQLTPLPPSAPTSADDNIKTPAERLRGPLPPSADDNLKTPPLATQEAEAEKPRKPKRQRAAEMEPPPEPKRRRVGDVEPSRKPKRRRAADVEPSSPEPKRRRVGDVEPSRKPKRRRAADVEPSSPEPKRRRLS</sequence>
<accession>E5RHQ5</accession>
<name>NPB11_HUMAN</name>
<gene>
    <name type="primary">NPIPB11</name>
</gene>
<proteinExistence type="inferred from homology"/>
<organism>
    <name type="scientific">Homo sapiens</name>
    <name type="common">Human</name>
    <dbReference type="NCBI Taxonomy" id="9606"/>
    <lineage>
        <taxon>Eukaryota</taxon>
        <taxon>Metazoa</taxon>
        <taxon>Chordata</taxon>
        <taxon>Craniata</taxon>
        <taxon>Vertebrata</taxon>
        <taxon>Euteleostomi</taxon>
        <taxon>Mammalia</taxon>
        <taxon>Eutheria</taxon>
        <taxon>Euarchontoglires</taxon>
        <taxon>Primates</taxon>
        <taxon>Haplorrhini</taxon>
        <taxon>Catarrhini</taxon>
        <taxon>Hominidae</taxon>
        <taxon>Homo</taxon>
    </lineage>
</organism>
<keyword id="KW-0472">Membrane</keyword>
<keyword id="KW-1185">Reference proteome</keyword>
<keyword id="KW-0812">Transmembrane</keyword>
<keyword id="KW-1133">Transmembrane helix</keyword>
<reference key="1">
    <citation type="journal article" date="2004" name="Nature">
        <title>The sequence and analysis of duplication-rich human chromosome 16.</title>
        <authorList>
            <person name="Martin J."/>
            <person name="Han C."/>
            <person name="Gordon L.A."/>
            <person name="Terry A."/>
            <person name="Prabhakar S."/>
            <person name="She X."/>
            <person name="Xie G."/>
            <person name="Hellsten U."/>
            <person name="Chan Y.M."/>
            <person name="Altherr M."/>
            <person name="Couronne O."/>
            <person name="Aerts A."/>
            <person name="Bajorek E."/>
            <person name="Black S."/>
            <person name="Blumer H."/>
            <person name="Branscomb E."/>
            <person name="Brown N.C."/>
            <person name="Bruno W.J."/>
            <person name="Buckingham J.M."/>
            <person name="Callen D.F."/>
            <person name="Campbell C.S."/>
            <person name="Campbell M.L."/>
            <person name="Campbell E.W."/>
            <person name="Caoile C."/>
            <person name="Challacombe J.F."/>
            <person name="Chasteen L.A."/>
            <person name="Chertkov O."/>
            <person name="Chi H.C."/>
            <person name="Christensen M."/>
            <person name="Clark L.M."/>
            <person name="Cohn J.D."/>
            <person name="Denys M."/>
            <person name="Detter J.C."/>
            <person name="Dickson M."/>
            <person name="Dimitrijevic-Bussod M."/>
            <person name="Escobar J."/>
            <person name="Fawcett J.J."/>
            <person name="Flowers D."/>
            <person name="Fotopulos D."/>
            <person name="Glavina T."/>
            <person name="Gomez M."/>
            <person name="Gonzales E."/>
            <person name="Goodstein D."/>
            <person name="Goodwin L.A."/>
            <person name="Grady D.L."/>
            <person name="Grigoriev I."/>
            <person name="Groza M."/>
            <person name="Hammon N."/>
            <person name="Hawkins T."/>
            <person name="Haydu L."/>
            <person name="Hildebrand C.E."/>
            <person name="Huang W."/>
            <person name="Israni S."/>
            <person name="Jett J."/>
            <person name="Jewett P.B."/>
            <person name="Kadner K."/>
            <person name="Kimball H."/>
            <person name="Kobayashi A."/>
            <person name="Krawczyk M.-C."/>
            <person name="Leyba T."/>
            <person name="Longmire J.L."/>
            <person name="Lopez F."/>
            <person name="Lou Y."/>
            <person name="Lowry S."/>
            <person name="Ludeman T."/>
            <person name="Manohar C.F."/>
            <person name="Mark G.A."/>
            <person name="McMurray K.L."/>
            <person name="Meincke L.J."/>
            <person name="Morgan J."/>
            <person name="Moyzis R.K."/>
            <person name="Mundt M.O."/>
            <person name="Munk A.C."/>
            <person name="Nandkeshwar R.D."/>
            <person name="Pitluck S."/>
            <person name="Pollard M."/>
            <person name="Predki P."/>
            <person name="Parson-Quintana B."/>
            <person name="Ramirez L."/>
            <person name="Rash S."/>
            <person name="Retterer J."/>
            <person name="Ricke D.O."/>
            <person name="Robinson D.L."/>
            <person name="Rodriguez A."/>
            <person name="Salamov A."/>
            <person name="Saunders E.H."/>
            <person name="Scott D."/>
            <person name="Shough T."/>
            <person name="Stallings R.L."/>
            <person name="Stalvey M."/>
            <person name="Sutherland R.D."/>
            <person name="Tapia R."/>
            <person name="Tesmer J.G."/>
            <person name="Thayer N."/>
            <person name="Thompson L.S."/>
            <person name="Tice H."/>
            <person name="Torney D.C."/>
            <person name="Tran-Gyamfi M."/>
            <person name="Tsai M."/>
            <person name="Ulanovsky L.E."/>
            <person name="Ustaszewska A."/>
            <person name="Vo N."/>
            <person name="White P.S."/>
            <person name="Williams A.L."/>
            <person name="Wills P.L."/>
            <person name="Wu J.-R."/>
            <person name="Wu K."/>
            <person name="Yang J."/>
            <person name="DeJong P."/>
            <person name="Bruce D."/>
            <person name="Doggett N.A."/>
            <person name="Deaven L."/>
            <person name="Schmutz J."/>
            <person name="Grimwood J."/>
            <person name="Richardson P."/>
            <person name="Rokhsar D.S."/>
            <person name="Eichler E.E."/>
            <person name="Gilna P."/>
            <person name="Lucas S.M."/>
            <person name="Myers R.M."/>
            <person name="Rubin E.M."/>
            <person name="Pennacchio L.A."/>
        </authorList>
    </citation>
    <scope>NUCLEOTIDE SEQUENCE [LARGE SCALE GENOMIC DNA]</scope>
</reference>
<comment type="subcellular location">
    <subcellularLocation>
        <location evidence="3">Membrane</location>
        <topology evidence="3">Single-pass membrane protein</topology>
    </subcellularLocation>
</comment>
<comment type="similarity">
    <text evidence="3">Belongs to the NPIP family.</text>
</comment>
<feature type="chain" id="PRO_0000423924" description="Nuclear pore complex-interacting protein family member B11">
    <location>
        <begin position="1"/>
        <end position="1161"/>
    </location>
</feature>
<feature type="transmembrane region" description="Helical" evidence="1">
    <location>
        <begin position="63"/>
        <end position="87"/>
    </location>
</feature>
<feature type="region of interest" description="Disordered" evidence="2">
    <location>
        <begin position="278"/>
        <end position="580"/>
    </location>
</feature>
<feature type="region of interest" description="Disordered" evidence="2">
    <location>
        <begin position="892"/>
        <end position="1161"/>
    </location>
</feature>
<feature type="compositionally biased region" description="Pro residues" evidence="2">
    <location>
        <begin position="311"/>
        <end position="321"/>
    </location>
</feature>
<feature type="compositionally biased region" description="Basic and acidic residues" evidence="2">
    <location>
        <begin position="368"/>
        <end position="378"/>
    </location>
</feature>
<feature type="compositionally biased region" description="Basic and acidic residues" evidence="2">
    <location>
        <begin position="410"/>
        <end position="420"/>
    </location>
</feature>
<feature type="compositionally biased region" description="Basic and acidic residues" evidence="2">
    <location>
        <begin position="452"/>
        <end position="462"/>
    </location>
</feature>
<feature type="compositionally biased region" description="Basic and acidic residues" evidence="2">
    <location>
        <begin position="494"/>
        <end position="504"/>
    </location>
</feature>
<feature type="compositionally biased region" description="Basic and acidic residues" evidence="2">
    <location>
        <begin position="536"/>
        <end position="546"/>
    </location>
</feature>
<feature type="compositionally biased region" description="Basic and acidic residues" evidence="2">
    <location>
        <begin position="918"/>
        <end position="928"/>
    </location>
</feature>
<feature type="compositionally biased region" description="Basic and acidic residues" evidence="2">
    <location>
        <begin position="960"/>
        <end position="970"/>
    </location>
</feature>
<feature type="compositionally biased region" description="Basic and acidic residues" evidence="2">
    <location>
        <begin position="1002"/>
        <end position="1012"/>
    </location>
</feature>
<feature type="compositionally biased region" description="Basic and acidic residues" evidence="2">
    <location>
        <begin position="1044"/>
        <end position="1054"/>
    </location>
</feature>
<dbReference type="EMBL" id="AC025279">
    <property type="status" value="NOT_ANNOTATED_CDS"/>
    <property type="molecule type" value="Genomic_DNA"/>
</dbReference>
<dbReference type="CCDS" id="CCDS92131.1"/>
<dbReference type="RefSeq" id="NP_001297066.2">
    <property type="nucleotide sequence ID" value="NM_001310137.5"/>
</dbReference>
<dbReference type="SMR" id="E5RHQ5"/>
<dbReference type="FunCoup" id="E5RHQ5">
    <property type="interactions" value="9"/>
</dbReference>
<dbReference type="STRING" id="9606.ENSP00000430853"/>
<dbReference type="GlyGen" id="E5RHQ5">
    <property type="glycosylation" value="1 site"/>
</dbReference>
<dbReference type="iPTMnet" id="E5RHQ5"/>
<dbReference type="PhosphoSitePlus" id="E5RHQ5"/>
<dbReference type="BioMuta" id="NPIPB11"/>
<dbReference type="jPOST" id="E5RHQ5"/>
<dbReference type="MassIVE" id="E5RHQ5"/>
<dbReference type="PaxDb" id="9606-ENSP00000430853"/>
<dbReference type="PeptideAtlas" id="E5RHQ5"/>
<dbReference type="Ensembl" id="ENST00000524087.5">
    <property type="protein sequence ID" value="ENSP00000430853.1"/>
    <property type="gene ID" value="ENSG00000254206.6"/>
</dbReference>
<dbReference type="Ensembl" id="ENST00000698511.1">
    <property type="protein sequence ID" value="ENSP00000513761.1"/>
    <property type="gene ID" value="ENSG00000254206.6"/>
</dbReference>
<dbReference type="GeneID" id="728888"/>
<dbReference type="MANE-Select" id="ENST00000698511.1">
    <property type="protein sequence ID" value="ENSP00000513761.1"/>
    <property type="RefSeq nucleotide sequence ID" value="NM_001310137.5"/>
    <property type="RefSeq protein sequence ID" value="NP_001297066.2"/>
</dbReference>
<dbReference type="UCSC" id="uc059ssm.1">
    <property type="organism name" value="human"/>
</dbReference>
<dbReference type="AGR" id="HGNC:37453"/>
<dbReference type="GeneCards" id="NPIPB11"/>
<dbReference type="HGNC" id="HGNC:37453">
    <property type="gene designation" value="NPIPB11"/>
</dbReference>
<dbReference type="HPA" id="ENSG00000254206">
    <property type="expression patterns" value="Low tissue specificity"/>
</dbReference>
<dbReference type="neXtProt" id="NX_E5RHQ5"/>
<dbReference type="OpenTargets" id="ENSG00000254206"/>
<dbReference type="VEuPathDB" id="HostDB:ENSG00000254206"/>
<dbReference type="eggNOG" id="ENOG502TDBV">
    <property type="taxonomic scope" value="Eukaryota"/>
</dbReference>
<dbReference type="GeneTree" id="ENSGT00540000072033"/>
<dbReference type="HOGENOM" id="CLU_308511_0_0_1"/>
<dbReference type="InParanoid" id="E5RHQ5"/>
<dbReference type="OMA" id="FHPQPMI"/>
<dbReference type="OrthoDB" id="9470913at2759"/>
<dbReference type="PAN-GO" id="E5RHQ5">
    <property type="GO annotations" value="1 GO annotation based on evolutionary models"/>
</dbReference>
<dbReference type="PhylomeDB" id="E5RHQ5"/>
<dbReference type="TreeFam" id="TF333389"/>
<dbReference type="ChiTaRS" id="NPIPB11">
    <property type="organism name" value="human"/>
</dbReference>
<dbReference type="Pharos" id="E5RHQ5">
    <property type="development level" value="Tdark"/>
</dbReference>
<dbReference type="PRO" id="PR:E5RHQ5"/>
<dbReference type="Proteomes" id="UP000005640">
    <property type="component" value="Chromosome 16"/>
</dbReference>
<dbReference type="RNAct" id="E5RHQ5">
    <property type="molecule type" value="protein"/>
</dbReference>
<dbReference type="Bgee" id="ENSG00000254206">
    <property type="expression patterns" value="Expressed in primordial germ cell in gonad and 94 other cell types or tissues"/>
</dbReference>
<dbReference type="ExpressionAtlas" id="E5RHQ5">
    <property type="expression patterns" value="baseline and differential"/>
</dbReference>
<dbReference type="GO" id="GO:0016020">
    <property type="term" value="C:membrane"/>
    <property type="evidence" value="ECO:0007669"/>
    <property type="project" value="UniProtKB-SubCell"/>
</dbReference>
<dbReference type="InterPro" id="IPR048893">
    <property type="entry name" value="NPB13-like_MII_rpt"/>
</dbReference>
<dbReference type="InterPro" id="IPR009443">
    <property type="entry name" value="NPIP"/>
</dbReference>
<dbReference type="InterPro" id="IPR054697">
    <property type="entry name" value="NPIP_N"/>
</dbReference>
<dbReference type="PANTHER" id="PTHR15438">
    <property type="entry name" value="NUCLEAR PORE COMPLEX INTERACTING PROTEIN"/>
    <property type="match status" value="1"/>
</dbReference>
<dbReference type="PANTHER" id="PTHR15438:SF5">
    <property type="entry name" value="NUCLEAR PORE COMPLEX-INTERACTING PROTEIN FAMILY MEMBER A2-RELATED"/>
    <property type="match status" value="1"/>
</dbReference>
<dbReference type="Pfam" id="PF20885">
    <property type="entry name" value="NPB13-l_MII_rpt"/>
    <property type="match status" value="2"/>
</dbReference>
<dbReference type="Pfam" id="PF06409">
    <property type="entry name" value="NPIP"/>
    <property type="match status" value="1"/>
</dbReference>